<comment type="function">
    <text evidence="1">Catalyzes the ATP-dependent amination of UTP to CTP with either L-glutamine or ammonia as the source of nitrogen. Regulates intracellular CTP levels through interactions with the four ribonucleotide triphosphates.</text>
</comment>
<comment type="catalytic activity">
    <reaction evidence="1">
        <text>UTP + L-glutamine + ATP + H2O = CTP + L-glutamate + ADP + phosphate + 2 H(+)</text>
        <dbReference type="Rhea" id="RHEA:26426"/>
        <dbReference type="ChEBI" id="CHEBI:15377"/>
        <dbReference type="ChEBI" id="CHEBI:15378"/>
        <dbReference type="ChEBI" id="CHEBI:29985"/>
        <dbReference type="ChEBI" id="CHEBI:30616"/>
        <dbReference type="ChEBI" id="CHEBI:37563"/>
        <dbReference type="ChEBI" id="CHEBI:43474"/>
        <dbReference type="ChEBI" id="CHEBI:46398"/>
        <dbReference type="ChEBI" id="CHEBI:58359"/>
        <dbReference type="ChEBI" id="CHEBI:456216"/>
        <dbReference type="EC" id="6.3.4.2"/>
    </reaction>
</comment>
<comment type="catalytic activity">
    <reaction evidence="1">
        <text>L-glutamine + H2O = L-glutamate + NH4(+)</text>
        <dbReference type="Rhea" id="RHEA:15889"/>
        <dbReference type="ChEBI" id="CHEBI:15377"/>
        <dbReference type="ChEBI" id="CHEBI:28938"/>
        <dbReference type="ChEBI" id="CHEBI:29985"/>
        <dbReference type="ChEBI" id="CHEBI:58359"/>
    </reaction>
</comment>
<comment type="catalytic activity">
    <reaction evidence="1">
        <text>UTP + NH4(+) + ATP = CTP + ADP + phosphate + 2 H(+)</text>
        <dbReference type="Rhea" id="RHEA:16597"/>
        <dbReference type="ChEBI" id="CHEBI:15378"/>
        <dbReference type="ChEBI" id="CHEBI:28938"/>
        <dbReference type="ChEBI" id="CHEBI:30616"/>
        <dbReference type="ChEBI" id="CHEBI:37563"/>
        <dbReference type="ChEBI" id="CHEBI:43474"/>
        <dbReference type="ChEBI" id="CHEBI:46398"/>
        <dbReference type="ChEBI" id="CHEBI:456216"/>
    </reaction>
</comment>
<comment type="activity regulation">
    <text evidence="1">Allosterically activated by GTP, when glutamine is the substrate; GTP has no effect on the reaction when ammonia is the substrate. The allosteric effector GTP functions by stabilizing the protein conformation that binds the tetrahedral intermediate(s) formed during glutamine hydrolysis. Inhibited by the product CTP, via allosteric rather than competitive inhibition.</text>
</comment>
<comment type="pathway">
    <text evidence="1">Pyrimidine metabolism; CTP biosynthesis via de novo pathway; CTP from UDP: step 2/2.</text>
</comment>
<comment type="subunit">
    <text evidence="1">Homotetramer.</text>
</comment>
<comment type="miscellaneous">
    <text evidence="1">CTPSs have evolved a hybrid strategy for distinguishing between UTP and CTP. The overlapping regions of the product feedback inhibitory and substrate sites recognize a common feature in both compounds, the triphosphate moiety. To differentiate isosteric substrate and product pyrimidine rings, an additional pocket far from the expected kinase/ligase catalytic site, specifically recognizes the cytosine and ribose portions of the product inhibitor.</text>
</comment>
<comment type="similarity">
    <text evidence="1">Belongs to the CTP synthase family.</text>
</comment>
<sequence>MTTNYIFVTGGVVSSLGKGIAAASLAAILEARGLNVTIMKLDPYINVDPGTMSPIQHGEVFVTEDGAETDLDLGHYERFIRTKMSRRNNFTTGRIYSDVLRKERRGDYLGATVQVIPHITNAIKERVLEGGEGHDVVLVEIGGTVGDIESLPFLEAIRQLAVDIGREHALFMHLTLVPYLAAAGEVKTKPTQHSVKELLSIGIQPDILICRSDRAVPANERAKIALFCNVPEKAVISMKDVDSIYKIPGLLKSQGLDDYICKRFSLNCPEANLSEWEQVIYEEANPAGEVTIGMVGKYIELPDAYKSVIEALKHGGLKNRVTVNIKLIDSQDVETRGVEILKDLDAILIPGGFGYRGVEGKIATARYARENNIPYLGICLGMQVALIEFARNVAGMDNANSTEFVPDCKYPVVALITEWRDEDGNVEVRSEKSDLGGTMRLGAQQCQLSDDSLVRQLYGASTIVERHRHRYEVNNMLLKQIEAAGLRVAGRSGDDQLVEIIEVPNHPWFVACQFHPEFTSTPRDGHPLFAGFVKAANEHQKRQAK</sequence>
<organism>
    <name type="scientific">Salmonella gallinarum (strain 287/91 / NCTC 13346)</name>
    <dbReference type="NCBI Taxonomy" id="550538"/>
    <lineage>
        <taxon>Bacteria</taxon>
        <taxon>Pseudomonadati</taxon>
        <taxon>Pseudomonadota</taxon>
        <taxon>Gammaproteobacteria</taxon>
        <taxon>Enterobacterales</taxon>
        <taxon>Enterobacteriaceae</taxon>
        <taxon>Salmonella</taxon>
    </lineage>
</organism>
<proteinExistence type="inferred from homology"/>
<dbReference type="EC" id="6.3.4.2" evidence="1"/>
<dbReference type="EMBL" id="AM933173">
    <property type="protein sequence ID" value="CAR38664.1"/>
    <property type="molecule type" value="Genomic_DNA"/>
</dbReference>
<dbReference type="RefSeq" id="WP_000210863.1">
    <property type="nucleotide sequence ID" value="NC_011274.1"/>
</dbReference>
<dbReference type="SMR" id="B5RDS6"/>
<dbReference type="MEROPS" id="C26.964"/>
<dbReference type="KEGG" id="seg:SG2857"/>
<dbReference type="HOGENOM" id="CLU_011675_5_0_6"/>
<dbReference type="UniPathway" id="UPA00159">
    <property type="reaction ID" value="UER00277"/>
</dbReference>
<dbReference type="Proteomes" id="UP000008321">
    <property type="component" value="Chromosome"/>
</dbReference>
<dbReference type="GO" id="GO:0005829">
    <property type="term" value="C:cytosol"/>
    <property type="evidence" value="ECO:0007669"/>
    <property type="project" value="TreeGrafter"/>
</dbReference>
<dbReference type="GO" id="GO:0005524">
    <property type="term" value="F:ATP binding"/>
    <property type="evidence" value="ECO:0007669"/>
    <property type="project" value="UniProtKB-KW"/>
</dbReference>
<dbReference type="GO" id="GO:0003883">
    <property type="term" value="F:CTP synthase activity"/>
    <property type="evidence" value="ECO:0007669"/>
    <property type="project" value="UniProtKB-UniRule"/>
</dbReference>
<dbReference type="GO" id="GO:0004359">
    <property type="term" value="F:glutaminase activity"/>
    <property type="evidence" value="ECO:0007669"/>
    <property type="project" value="RHEA"/>
</dbReference>
<dbReference type="GO" id="GO:0042802">
    <property type="term" value="F:identical protein binding"/>
    <property type="evidence" value="ECO:0007669"/>
    <property type="project" value="TreeGrafter"/>
</dbReference>
<dbReference type="GO" id="GO:0046872">
    <property type="term" value="F:metal ion binding"/>
    <property type="evidence" value="ECO:0007669"/>
    <property type="project" value="UniProtKB-KW"/>
</dbReference>
<dbReference type="GO" id="GO:0044210">
    <property type="term" value="P:'de novo' CTP biosynthetic process"/>
    <property type="evidence" value="ECO:0007669"/>
    <property type="project" value="UniProtKB-UniRule"/>
</dbReference>
<dbReference type="GO" id="GO:0019856">
    <property type="term" value="P:pyrimidine nucleobase biosynthetic process"/>
    <property type="evidence" value="ECO:0007669"/>
    <property type="project" value="TreeGrafter"/>
</dbReference>
<dbReference type="CDD" id="cd03113">
    <property type="entry name" value="CTPS_N"/>
    <property type="match status" value="1"/>
</dbReference>
<dbReference type="CDD" id="cd01746">
    <property type="entry name" value="GATase1_CTP_Synthase"/>
    <property type="match status" value="1"/>
</dbReference>
<dbReference type="FunFam" id="3.40.50.300:FF:000009">
    <property type="entry name" value="CTP synthase"/>
    <property type="match status" value="1"/>
</dbReference>
<dbReference type="FunFam" id="3.40.50.880:FF:000002">
    <property type="entry name" value="CTP synthase"/>
    <property type="match status" value="1"/>
</dbReference>
<dbReference type="Gene3D" id="3.40.50.880">
    <property type="match status" value="1"/>
</dbReference>
<dbReference type="Gene3D" id="3.40.50.300">
    <property type="entry name" value="P-loop containing nucleotide triphosphate hydrolases"/>
    <property type="match status" value="1"/>
</dbReference>
<dbReference type="HAMAP" id="MF_01227">
    <property type="entry name" value="PyrG"/>
    <property type="match status" value="1"/>
</dbReference>
<dbReference type="InterPro" id="IPR029062">
    <property type="entry name" value="Class_I_gatase-like"/>
</dbReference>
<dbReference type="InterPro" id="IPR004468">
    <property type="entry name" value="CTP_synthase"/>
</dbReference>
<dbReference type="InterPro" id="IPR017456">
    <property type="entry name" value="CTP_synthase_N"/>
</dbReference>
<dbReference type="InterPro" id="IPR017926">
    <property type="entry name" value="GATASE"/>
</dbReference>
<dbReference type="InterPro" id="IPR033828">
    <property type="entry name" value="GATase1_CTP_Synthase"/>
</dbReference>
<dbReference type="InterPro" id="IPR027417">
    <property type="entry name" value="P-loop_NTPase"/>
</dbReference>
<dbReference type="NCBIfam" id="NF003792">
    <property type="entry name" value="PRK05380.1"/>
    <property type="match status" value="1"/>
</dbReference>
<dbReference type="NCBIfam" id="TIGR00337">
    <property type="entry name" value="PyrG"/>
    <property type="match status" value="1"/>
</dbReference>
<dbReference type="PANTHER" id="PTHR11550">
    <property type="entry name" value="CTP SYNTHASE"/>
    <property type="match status" value="1"/>
</dbReference>
<dbReference type="PANTHER" id="PTHR11550:SF0">
    <property type="entry name" value="CTP SYNTHASE-RELATED"/>
    <property type="match status" value="1"/>
</dbReference>
<dbReference type="Pfam" id="PF06418">
    <property type="entry name" value="CTP_synth_N"/>
    <property type="match status" value="1"/>
</dbReference>
<dbReference type="Pfam" id="PF00117">
    <property type="entry name" value="GATase"/>
    <property type="match status" value="1"/>
</dbReference>
<dbReference type="SUPFAM" id="SSF52317">
    <property type="entry name" value="Class I glutamine amidotransferase-like"/>
    <property type="match status" value="1"/>
</dbReference>
<dbReference type="SUPFAM" id="SSF52540">
    <property type="entry name" value="P-loop containing nucleoside triphosphate hydrolases"/>
    <property type="match status" value="1"/>
</dbReference>
<dbReference type="PROSITE" id="PS51273">
    <property type="entry name" value="GATASE_TYPE_1"/>
    <property type="match status" value="1"/>
</dbReference>
<feature type="chain" id="PRO_1000139560" description="CTP synthase">
    <location>
        <begin position="1"/>
        <end position="545"/>
    </location>
</feature>
<feature type="domain" description="Glutamine amidotransferase type-1" evidence="1">
    <location>
        <begin position="291"/>
        <end position="542"/>
    </location>
</feature>
<feature type="region of interest" description="Amidoligase domain" evidence="1">
    <location>
        <begin position="1"/>
        <end position="266"/>
    </location>
</feature>
<feature type="active site" description="Nucleophile; for glutamine hydrolysis" evidence="1">
    <location>
        <position position="379"/>
    </location>
</feature>
<feature type="active site" evidence="1">
    <location>
        <position position="515"/>
    </location>
</feature>
<feature type="active site" evidence="1">
    <location>
        <position position="517"/>
    </location>
</feature>
<feature type="binding site" evidence="1">
    <location>
        <position position="14"/>
    </location>
    <ligand>
        <name>CTP</name>
        <dbReference type="ChEBI" id="CHEBI:37563"/>
        <note>allosteric inhibitor</note>
    </ligand>
</feature>
<feature type="binding site" evidence="1">
    <location>
        <position position="14"/>
    </location>
    <ligand>
        <name>UTP</name>
        <dbReference type="ChEBI" id="CHEBI:46398"/>
    </ligand>
</feature>
<feature type="binding site" evidence="1">
    <location>
        <begin position="15"/>
        <end position="20"/>
    </location>
    <ligand>
        <name>ATP</name>
        <dbReference type="ChEBI" id="CHEBI:30616"/>
    </ligand>
</feature>
<feature type="binding site" evidence="1">
    <location>
        <position position="72"/>
    </location>
    <ligand>
        <name>ATP</name>
        <dbReference type="ChEBI" id="CHEBI:30616"/>
    </ligand>
</feature>
<feature type="binding site" evidence="1">
    <location>
        <position position="72"/>
    </location>
    <ligand>
        <name>Mg(2+)</name>
        <dbReference type="ChEBI" id="CHEBI:18420"/>
    </ligand>
</feature>
<feature type="binding site" evidence="1">
    <location>
        <position position="140"/>
    </location>
    <ligand>
        <name>Mg(2+)</name>
        <dbReference type="ChEBI" id="CHEBI:18420"/>
    </ligand>
</feature>
<feature type="binding site" evidence="1">
    <location>
        <begin position="147"/>
        <end position="149"/>
    </location>
    <ligand>
        <name>CTP</name>
        <dbReference type="ChEBI" id="CHEBI:37563"/>
        <note>allosteric inhibitor</note>
    </ligand>
</feature>
<feature type="binding site" evidence="1">
    <location>
        <begin position="187"/>
        <end position="192"/>
    </location>
    <ligand>
        <name>CTP</name>
        <dbReference type="ChEBI" id="CHEBI:37563"/>
        <note>allosteric inhibitor</note>
    </ligand>
</feature>
<feature type="binding site" evidence="1">
    <location>
        <begin position="187"/>
        <end position="192"/>
    </location>
    <ligand>
        <name>UTP</name>
        <dbReference type="ChEBI" id="CHEBI:46398"/>
    </ligand>
</feature>
<feature type="binding site" evidence="1">
    <location>
        <position position="223"/>
    </location>
    <ligand>
        <name>CTP</name>
        <dbReference type="ChEBI" id="CHEBI:37563"/>
        <note>allosteric inhibitor</note>
    </ligand>
</feature>
<feature type="binding site" evidence="1">
    <location>
        <position position="223"/>
    </location>
    <ligand>
        <name>UTP</name>
        <dbReference type="ChEBI" id="CHEBI:46398"/>
    </ligand>
</feature>
<feature type="binding site" evidence="1">
    <location>
        <begin position="239"/>
        <end position="241"/>
    </location>
    <ligand>
        <name>ATP</name>
        <dbReference type="ChEBI" id="CHEBI:30616"/>
    </ligand>
</feature>
<feature type="binding site" evidence="1">
    <location>
        <position position="352"/>
    </location>
    <ligand>
        <name>L-glutamine</name>
        <dbReference type="ChEBI" id="CHEBI:58359"/>
    </ligand>
</feature>
<feature type="binding site" evidence="1">
    <location>
        <begin position="380"/>
        <end position="383"/>
    </location>
    <ligand>
        <name>L-glutamine</name>
        <dbReference type="ChEBI" id="CHEBI:58359"/>
    </ligand>
</feature>
<feature type="binding site" evidence="1">
    <location>
        <position position="403"/>
    </location>
    <ligand>
        <name>L-glutamine</name>
        <dbReference type="ChEBI" id="CHEBI:58359"/>
    </ligand>
</feature>
<feature type="binding site" evidence="1">
    <location>
        <position position="470"/>
    </location>
    <ligand>
        <name>L-glutamine</name>
        <dbReference type="ChEBI" id="CHEBI:58359"/>
    </ligand>
</feature>
<reference key="1">
    <citation type="journal article" date="2008" name="Genome Res.">
        <title>Comparative genome analysis of Salmonella enteritidis PT4 and Salmonella gallinarum 287/91 provides insights into evolutionary and host adaptation pathways.</title>
        <authorList>
            <person name="Thomson N.R."/>
            <person name="Clayton D.J."/>
            <person name="Windhorst D."/>
            <person name="Vernikos G."/>
            <person name="Davidson S."/>
            <person name="Churcher C."/>
            <person name="Quail M.A."/>
            <person name="Stevens M."/>
            <person name="Jones M.A."/>
            <person name="Watson M."/>
            <person name="Barron A."/>
            <person name="Layton A."/>
            <person name="Pickard D."/>
            <person name="Kingsley R.A."/>
            <person name="Bignell A."/>
            <person name="Clark L."/>
            <person name="Harris B."/>
            <person name="Ormond D."/>
            <person name="Abdellah Z."/>
            <person name="Brooks K."/>
            <person name="Cherevach I."/>
            <person name="Chillingworth T."/>
            <person name="Woodward J."/>
            <person name="Norberczak H."/>
            <person name="Lord A."/>
            <person name="Arrowsmith C."/>
            <person name="Jagels K."/>
            <person name="Moule S."/>
            <person name="Mungall K."/>
            <person name="Saunders M."/>
            <person name="Whitehead S."/>
            <person name="Chabalgoity J.A."/>
            <person name="Maskell D."/>
            <person name="Humphreys T."/>
            <person name="Roberts M."/>
            <person name="Barrow P.A."/>
            <person name="Dougan G."/>
            <person name="Parkhill J."/>
        </authorList>
    </citation>
    <scope>NUCLEOTIDE SEQUENCE [LARGE SCALE GENOMIC DNA]</scope>
    <source>
        <strain>287/91 / NCTC 13346</strain>
    </source>
</reference>
<accession>B5RDS6</accession>
<protein>
    <recommendedName>
        <fullName evidence="1">CTP synthase</fullName>
        <ecNumber evidence="1">6.3.4.2</ecNumber>
    </recommendedName>
    <alternativeName>
        <fullName evidence="1">Cytidine 5'-triphosphate synthase</fullName>
    </alternativeName>
    <alternativeName>
        <fullName evidence="1">Cytidine triphosphate synthetase</fullName>
        <shortName evidence="1">CTP synthetase</shortName>
        <shortName evidence="1">CTPS</shortName>
    </alternativeName>
    <alternativeName>
        <fullName evidence="1">UTP--ammonia ligase</fullName>
    </alternativeName>
</protein>
<evidence type="ECO:0000255" key="1">
    <source>
        <dbReference type="HAMAP-Rule" id="MF_01227"/>
    </source>
</evidence>
<name>PYRG_SALG2</name>
<keyword id="KW-0067">ATP-binding</keyword>
<keyword id="KW-0315">Glutamine amidotransferase</keyword>
<keyword id="KW-0436">Ligase</keyword>
<keyword id="KW-0460">Magnesium</keyword>
<keyword id="KW-0479">Metal-binding</keyword>
<keyword id="KW-0547">Nucleotide-binding</keyword>
<keyword id="KW-0665">Pyrimidine biosynthesis</keyword>
<gene>
    <name evidence="1" type="primary">pyrG</name>
    <name type="ordered locus">SG2857</name>
</gene>